<comment type="function">
    <text evidence="1">Binds directly to 16S ribosomal RNA.</text>
</comment>
<comment type="similarity">
    <text evidence="1">Belongs to the bacterial ribosomal protein bS20 family.</text>
</comment>
<proteinExistence type="inferred from homology"/>
<gene>
    <name evidence="1" type="primary">rpsT</name>
    <name type="ordered locus">CPS_1179</name>
</gene>
<accession>Q486U3</accession>
<name>RS20_COLP3</name>
<protein>
    <recommendedName>
        <fullName evidence="1">Small ribosomal subunit protein bS20</fullName>
    </recommendedName>
    <alternativeName>
        <fullName evidence="3">30S ribosomal protein S20</fullName>
    </alternativeName>
</protein>
<feature type="chain" id="PRO_0000224961" description="Small ribosomal subunit protein bS20">
    <location>
        <begin position="1"/>
        <end position="86"/>
    </location>
</feature>
<feature type="region of interest" description="Disordered" evidence="2">
    <location>
        <begin position="1"/>
        <end position="27"/>
    </location>
</feature>
<sequence>MANSKQAKKRAGQSEKRRQHNASRRSMMRTLVKKVLAAIEAGDKEVATKELAAATPTLDRYASKGLIHKNKAARSKSRLNAAIKAL</sequence>
<organism>
    <name type="scientific">Colwellia psychrerythraea (strain 34H / ATCC BAA-681)</name>
    <name type="common">Vibrio psychroerythus</name>
    <dbReference type="NCBI Taxonomy" id="167879"/>
    <lineage>
        <taxon>Bacteria</taxon>
        <taxon>Pseudomonadati</taxon>
        <taxon>Pseudomonadota</taxon>
        <taxon>Gammaproteobacteria</taxon>
        <taxon>Alteromonadales</taxon>
        <taxon>Colwelliaceae</taxon>
        <taxon>Colwellia</taxon>
    </lineage>
</organism>
<evidence type="ECO:0000255" key="1">
    <source>
        <dbReference type="HAMAP-Rule" id="MF_00500"/>
    </source>
</evidence>
<evidence type="ECO:0000256" key="2">
    <source>
        <dbReference type="SAM" id="MobiDB-lite"/>
    </source>
</evidence>
<evidence type="ECO:0000305" key="3"/>
<dbReference type="EMBL" id="CP000083">
    <property type="protein sequence ID" value="AAZ25272.1"/>
    <property type="molecule type" value="Genomic_DNA"/>
</dbReference>
<dbReference type="RefSeq" id="WP_011042016.1">
    <property type="nucleotide sequence ID" value="NC_003910.7"/>
</dbReference>
<dbReference type="SMR" id="Q486U3"/>
<dbReference type="STRING" id="167879.CPS_1179"/>
<dbReference type="KEGG" id="cps:CPS_1179"/>
<dbReference type="eggNOG" id="COG0268">
    <property type="taxonomic scope" value="Bacteria"/>
</dbReference>
<dbReference type="HOGENOM" id="CLU_160655_4_0_6"/>
<dbReference type="Proteomes" id="UP000000547">
    <property type="component" value="Chromosome"/>
</dbReference>
<dbReference type="GO" id="GO:0005829">
    <property type="term" value="C:cytosol"/>
    <property type="evidence" value="ECO:0007669"/>
    <property type="project" value="TreeGrafter"/>
</dbReference>
<dbReference type="GO" id="GO:0015935">
    <property type="term" value="C:small ribosomal subunit"/>
    <property type="evidence" value="ECO:0007669"/>
    <property type="project" value="TreeGrafter"/>
</dbReference>
<dbReference type="GO" id="GO:0070181">
    <property type="term" value="F:small ribosomal subunit rRNA binding"/>
    <property type="evidence" value="ECO:0007669"/>
    <property type="project" value="TreeGrafter"/>
</dbReference>
<dbReference type="GO" id="GO:0003735">
    <property type="term" value="F:structural constituent of ribosome"/>
    <property type="evidence" value="ECO:0007669"/>
    <property type="project" value="InterPro"/>
</dbReference>
<dbReference type="GO" id="GO:0006412">
    <property type="term" value="P:translation"/>
    <property type="evidence" value="ECO:0007669"/>
    <property type="project" value="UniProtKB-UniRule"/>
</dbReference>
<dbReference type="FunFam" id="1.20.58.110:FF:000001">
    <property type="entry name" value="30S ribosomal protein S20"/>
    <property type="match status" value="1"/>
</dbReference>
<dbReference type="Gene3D" id="1.20.58.110">
    <property type="entry name" value="Ribosomal protein S20"/>
    <property type="match status" value="1"/>
</dbReference>
<dbReference type="HAMAP" id="MF_00500">
    <property type="entry name" value="Ribosomal_bS20"/>
    <property type="match status" value="1"/>
</dbReference>
<dbReference type="InterPro" id="IPR002583">
    <property type="entry name" value="Ribosomal_bS20"/>
</dbReference>
<dbReference type="InterPro" id="IPR036510">
    <property type="entry name" value="Ribosomal_bS20_sf"/>
</dbReference>
<dbReference type="NCBIfam" id="TIGR00029">
    <property type="entry name" value="S20"/>
    <property type="match status" value="1"/>
</dbReference>
<dbReference type="PANTHER" id="PTHR33398">
    <property type="entry name" value="30S RIBOSOMAL PROTEIN S20"/>
    <property type="match status" value="1"/>
</dbReference>
<dbReference type="PANTHER" id="PTHR33398:SF1">
    <property type="entry name" value="SMALL RIBOSOMAL SUBUNIT PROTEIN BS20C"/>
    <property type="match status" value="1"/>
</dbReference>
<dbReference type="Pfam" id="PF01649">
    <property type="entry name" value="Ribosomal_S20p"/>
    <property type="match status" value="1"/>
</dbReference>
<dbReference type="SUPFAM" id="SSF46992">
    <property type="entry name" value="Ribosomal protein S20"/>
    <property type="match status" value="1"/>
</dbReference>
<keyword id="KW-0687">Ribonucleoprotein</keyword>
<keyword id="KW-0689">Ribosomal protein</keyword>
<keyword id="KW-0694">RNA-binding</keyword>
<keyword id="KW-0699">rRNA-binding</keyword>
<reference key="1">
    <citation type="journal article" date="2005" name="Proc. Natl. Acad. Sci. U.S.A.">
        <title>The psychrophilic lifestyle as revealed by the genome sequence of Colwellia psychrerythraea 34H through genomic and proteomic analyses.</title>
        <authorList>
            <person name="Methe B.A."/>
            <person name="Nelson K.E."/>
            <person name="Deming J.W."/>
            <person name="Momen B."/>
            <person name="Melamud E."/>
            <person name="Zhang X."/>
            <person name="Moult J."/>
            <person name="Madupu R."/>
            <person name="Nelson W.C."/>
            <person name="Dodson R.J."/>
            <person name="Brinkac L.M."/>
            <person name="Daugherty S.C."/>
            <person name="Durkin A.S."/>
            <person name="DeBoy R.T."/>
            <person name="Kolonay J.F."/>
            <person name="Sullivan S.A."/>
            <person name="Zhou L."/>
            <person name="Davidsen T.M."/>
            <person name="Wu M."/>
            <person name="Huston A.L."/>
            <person name="Lewis M."/>
            <person name="Weaver B."/>
            <person name="Weidman J.F."/>
            <person name="Khouri H."/>
            <person name="Utterback T.R."/>
            <person name="Feldblyum T.V."/>
            <person name="Fraser C.M."/>
        </authorList>
    </citation>
    <scope>NUCLEOTIDE SEQUENCE [LARGE SCALE GENOMIC DNA]</scope>
    <source>
        <strain>34H / ATCC BAA-681</strain>
    </source>
</reference>